<organism>
    <name type="scientific">Streptococcus thermophilus (strain ATCC BAA-491 / LMD-9)</name>
    <dbReference type="NCBI Taxonomy" id="322159"/>
    <lineage>
        <taxon>Bacteria</taxon>
        <taxon>Bacillati</taxon>
        <taxon>Bacillota</taxon>
        <taxon>Bacilli</taxon>
        <taxon>Lactobacillales</taxon>
        <taxon>Streptococcaceae</taxon>
        <taxon>Streptococcus</taxon>
    </lineage>
</organism>
<accession>Q03J44</accession>
<protein>
    <recommendedName>
        <fullName evidence="1">Xaa-Pro dipeptidyl-peptidase</fullName>
        <ecNumber evidence="1">3.4.14.11</ecNumber>
    </recommendedName>
    <alternativeName>
        <fullName evidence="1">X-Pro dipeptidyl-peptidase</fullName>
    </alternativeName>
    <alternativeName>
        <fullName evidence="1">X-prolyl-dipeptidyl aminopeptidase</fullName>
        <shortName evidence="1">X-PDAP</shortName>
    </alternativeName>
</protein>
<keyword id="KW-0031">Aminopeptidase</keyword>
<keyword id="KW-0963">Cytoplasm</keyword>
<keyword id="KW-0378">Hydrolase</keyword>
<keyword id="KW-0645">Protease</keyword>
<keyword id="KW-0720">Serine protease</keyword>
<feature type="chain" id="PRO_1000045497" description="Xaa-Pro dipeptidyl-peptidase">
    <location>
        <begin position="1"/>
        <end position="755"/>
    </location>
</feature>
<feature type="active site" description="Charge relay system" evidence="1">
    <location>
        <position position="348"/>
    </location>
</feature>
<feature type="active site" description="Charge relay system" evidence="1">
    <location>
        <position position="468"/>
    </location>
</feature>
<feature type="active site" description="Charge relay system" evidence="1">
    <location>
        <position position="498"/>
    </location>
</feature>
<comment type="function">
    <text evidence="1">Removes N-terminal dipeptides sequentially from polypeptides having unsubstituted N-termini provided that the penultimate residue is proline.</text>
</comment>
<comment type="catalytic activity">
    <reaction evidence="1">
        <text>Hydrolyzes Xaa-Pro-|- bonds to release unblocked, N-terminal dipeptides from substrates including Ala-Pro-|-p-nitroanilide and (sequentially) Tyr-Pro-|-Phe-Pro-|-Gly-Pro-|-Ile.</text>
        <dbReference type="EC" id="3.4.14.11"/>
    </reaction>
</comment>
<comment type="subunit">
    <text evidence="1">Homodimer.</text>
</comment>
<comment type="subcellular location">
    <subcellularLocation>
        <location evidence="1">Cytoplasm</location>
    </subcellularLocation>
</comment>
<comment type="similarity">
    <text evidence="1">Belongs to the peptidase S15 family.</text>
</comment>
<evidence type="ECO:0000255" key="1">
    <source>
        <dbReference type="HAMAP-Rule" id="MF_00698"/>
    </source>
</evidence>
<reference key="1">
    <citation type="journal article" date="2006" name="Proc. Natl. Acad. Sci. U.S.A.">
        <title>Comparative genomics of the lactic acid bacteria.</title>
        <authorList>
            <person name="Makarova K.S."/>
            <person name="Slesarev A."/>
            <person name="Wolf Y.I."/>
            <person name="Sorokin A."/>
            <person name="Mirkin B."/>
            <person name="Koonin E.V."/>
            <person name="Pavlov A."/>
            <person name="Pavlova N."/>
            <person name="Karamychev V."/>
            <person name="Polouchine N."/>
            <person name="Shakhova V."/>
            <person name="Grigoriev I."/>
            <person name="Lou Y."/>
            <person name="Rohksar D."/>
            <person name="Lucas S."/>
            <person name="Huang K."/>
            <person name="Goodstein D.M."/>
            <person name="Hawkins T."/>
            <person name="Plengvidhya V."/>
            <person name="Welker D."/>
            <person name="Hughes J."/>
            <person name="Goh Y."/>
            <person name="Benson A."/>
            <person name="Baldwin K."/>
            <person name="Lee J.-H."/>
            <person name="Diaz-Muniz I."/>
            <person name="Dosti B."/>
            <person name="Smeianov V."/>
            <person name="Wechter W."/>
            <person name="Barabote R."/>
            <person name="Lorca G."/>
            <person name="Altermann E."/>
            <person name="Barrangou R."/>
            <person name="Ganesan B."/>
            <person name="Xie Y."/>
            <person name="Rawsthorne H."/>
            <person name="Tamir D."/>
            <person name="Parker C."/>
            <person name="Breidt F."/>
            <person name="Broadbent J.R."/>
            <person name="Hutkins R."/>
            <person name="O'Sullivan D."/>
            <person name="Steele J."/>
            <person name="Unlu G."/>
            <person name="Saier M.H. Jr."/>
            <person name="Klaenhammer T."/>
            <person name="Richardson P."/>
            <person name="Kozyavkin S."/>
            <person name="Weimer B.C."/>
            <person name="Mills D.A."/>
        </authorList>
    </citation>
    <scope>NUCLEOTIDE SEQUENCE [LARGE SCALE GENOMIC DNA]</scope>
    <source>
        <strain>ATCC BAA-491 / LMD-9</strain>
    </source>
</reference>
<proteinExistence type="inferred from homology"/>
<name>PEPX_STRTD</name>
<gene>
    <name evidence="1" type="primary">pepX</name>
    <name type="ordered locus">STER_1633</name>
</gene>
<dbReference type="EC" id="3.4.14.11" evidence="1"/>
<dbReference type="EMBL" id="CP000419">
    <property type="protein sequence ID" value="ABJ66778.1"/>
    <property type="molecule type" value="Genomic_DNA"/>
</dbReference>
<dbReference type="RefSeq" id="WP_011681561.1">
    <property type="nucleotide sequence ID" value="NC_008532.1"/>
</dbReference>
<dbReference type="SMR" id="Q03J44"/>
<dbReference type="ESTHER" id="strtr-pepx">
    <property type="family name" value="Lactobacillus_peptidase"/>
</dbReference>
<dbReference type="MEROPS" id="S15.001"/>
<dbReference type="KEGG" id="ste:STER_1633"/>
<dbReference type="HOGENOM" id="CLU_011800_0_0_9"/>
<dbReference type="BRENDA" id="3.4.14.11">
    <property type="organism ID" value="5956"/>
</dbReference>
<dbReference type="GO" id="GO:0005737">
    <property type="term" value="C:cytoplasm"/>
    <property type="evidence" value="ECO:0007669"/>
    <property type="project" value="UniProtKB-SubCell"/>
</dbReference>
<dbReference type="GO" id="GO:0004177">
    <property type="term" value="F:aminopeptidase activity"/>
    <property type="evidence" value="ECO:0007669"/>
    <property type="project" value="UniProtKB-KW"/>
</dbReference>
<dbReference type="GO" id="GO:0008239">
    <property type="term" value="F:dipeptidyl-peptidase activity"/>
    <property type="evidence" value="ECO:0007669"/>
    <property type="project" value="UniProtKB-UniRule"/>
</dbReference>
<dbReference type="GO" id="GO:0008236">
    <property type="term" value="F:serine-type peptidase activity"/>
    <property type="evidence" value="ECO:0007669"/>
    <property type="project" value="UniProtKB-KW"/>
</dbReference>
<dbReference type="GO" id="GO:0006508">
    <property type="term" value="P:proteolysis"/>
    <property type="evidence" value="ECO:0007669"/>
    <property type="project" value="UniProtKB-KW"/>
</dbReference>
<dbReference type="Gene3D" id="1.10.246.70">
    <property type="match status" value="1"/>
</dbReference>
<dbReference type="Gene3D" id="3.40.50.1820">
    <property type="entry name" value="alpha/beta hydrolase"/>
    <property type="match status" value="1"/>
</dbReference>
<dbReference type="Gene3D" id="2.60.120.260">
    <property type="entry name" value="Galactose-binding domain-like"/>
    <property type="match status" value="1"/>
</dbReference>
<dbReference type="HAMAP" id="MF_00698">
    <property type="entry name" value="Aminopeptidase_S15"/>
    <property type="match status" value="1"/>
</dbReference>
<dbReference type="InterPro" id="IPR029058">
    <property type="entry name" value="AB_hydrolase_fold"/>
</dbReference>
<dbReference type="InterPro" id="IPR008979">
    <property type="entry name" value="Galactose-bd-like_sf"/>
</dbReference>
<dbReference type="InterPro" id="IPR008252">
    <property type="entry name" value="Pept_S15_Xpro"/>
</dbReference>
<dbReference type="InterPro" id="IPR015251">
    <property type="entry name" value="PepX_N_dom"/>
</dbReference>
<dbReference type="InterPro" id="IPR036313">
    <property type="entry name" value="PepX_N_dom_sf"/>
</dbReference>
<dbReference type="InterPro" id="IPR000383">
    <property type="entry name" value="Xaa-Pro-like_dom"/>
</dbReference>
<dbReference type="InterPro" id="IPR013736">
    <property type="entry name" value="Xaa-Pro_dipept_C"/>
</dbReference>
<dbReference type="NCBIfam" id="NF003783">
    <property type="entry name" value="PRK05371.1-4"/>
    <property type="match status" value="1"/>
</dbReference>
<dbReference type="Pfam" id="PF02129">
    <property type="entry name" value="Peptidase_S15"/>
    <property type="match status" value="1"/>
</dbReference>
<dbReference type="Pfam" id="PF08530">
    <property type="entry name" value="PepX_C"/>
    <property type="match status" value="1"/>
</dbReference>
<dbReference type="Pfam" id="PF09168">
    <property type="entry name" value="PepX_N"/>
    <property type="match status" value="1"/>
</dbReference>
<dbReference type="PRINTS" id="PR00923">
    <property type="entry name" value="LACTOPTASE"/>
</dbReference>
<dbReference type="SMART" id="SM00939">
    <property type="entry name" value="PepX_C"/>
    <property type="match status" value="1"/>
</dbReference>
<dbReference type="SMART" id="SM00940">
    <property type="entry name" value="PepX_N"/>
    <property type="match status" value="1"/>
</dbReference>
<dbReference type="SUPFAM" id="SSF53474">
    <property type="entry name" value="alpha/beta-Hydrolases"/>
    <property type="match status" value="1"/>
</dbReference>
<dbReference type="SUPFAM" id="SSF49785">
    <property type="entry name" value="Galactose-binding domain-like"/>
    <property type="match status" value="1"/>
</dbReference>
<dbReference type="SUPFAM" id="SSF81761">
    <property type="entry name" value="X-Prolyl dipeptidyl aminopeptidase PepX, N-terminal domain"/>
    <property type="match status" value="1"/>
</dbReference>
<sequence>MKFNQFSYIPVSPETAYQELRSLGFEVSLDASAKANFESFVRKYFLFFEDTDLALKNWIADPETDLLSFFQSDRPLTAEVFGLVALQLLGFVPNVDFTDSVAFLEKMAFPIAFDGSLNNLHQLLATRTQSGNTLIDQLVAQDLIPISNDYVFFNGKSLATFDTNQLHREVVYVETPVDTDKDGLLDLVKVTILRPNVDFPVPAMMTASPYQQGTNEPSSDKLTHKMEGDLLVKPAGKISLSRPEIKAPEADLTPINPVTKAEERFAHTDTYTLNDYMLARGVASIYVSGVGTFNSEGFMTSGDYQQVLAYKAVIDWLNGRARAFTSRSRQHTITADWASGKVTTTGLSYLGTMSNALATTGVDGLEMVIAEAGISSWYDYYRENGLLVSPGGYPGEDLDTLTEFTYSRALLAGEYLRHQKDYEAYLNELSTAIDRKHGDYNQFWHDRNYVQFADRVKATVVFTHGSQDWNVKPINVYQMFRALPKSLEKHLFFHNGAHVYMNAWQSIDFRESMNALICQKLLDLDNGYTLPTVIWQNNQSEQTWEVLDNFGHDNGKHIQLGKAEASIANHYEEEIFAKYGKAYQSFKDDLFMDKANAITLDFELDQDIQINGRVHLELRVKSSTNRGLISAQVLEMGDKKYLAPIPELKRMNVDNGRLFKEEALRELPFKQAKYRVITKGHLNLQNRKDLLSIENVTPNEWMTIGLDLQPTIYKLNKGDKLRLVLYTTDFEHTIRDNSDYEVTVDLSQSKMTLPY</sequence>